<name>MIMA_MYCGD</name>
<evidence type="ECO:0000250" key="1">
    <source>
        <dbReference type="UniProtKB" id="Q00456"/>
    </source>
</evidence>
<evidence type="ECO:0000269" key="2">
    <source>
    </source>
</evidence>
<evidence type="ECO:0000269" key="3">
    <source>
    </source>
</evidence>
<evidence type="ECO:0000269" key="4">
    <source>
    </source>
</evidence>
<evidence type="ECO:0000269" key="5">
    <source>
    </source>
</evidence>
<evidence type="ECO:0000303" key="6">
    <source>
    </source>
</evidence>
<evidence type="ECO:0000303" key="7">
    <source>
    </source>
</evidence>
<evidence type="ECO:0000305" key="8"/>
<evidence type="ECO:0000305" key="9">
    <source>
    </source>
</evidence>
<evidence type="ECO:0000305" key="10">
    <source>
    </source>
</evidence>
<evidence type="ECO:0000312" key="11">
    <source>
        <dbReference type="EMBL" id="BAJ76718.1"/>
    </source>
</evidence>
<proteinExistence type="evidence at protein level"/>
<protein>
    <recommendedName>
        <fullName evidence="6">Propane 2-monooxygenase, hydroxylase component large subunit</fullName>
        <ecNumber evidence="9">1.14.13.227</ecNumber>
    </recommendedName>
    <alternativeName>
        <fullName evidence="7">Acetone 1-monooxygenase</fullName>
    </alternativeName>
    <alternativeName>
        <fullName evidence="7">Methylethylketone 1-monooxygenase</fullName>
    </alternativeName>
    <alternativeName>
        <fullName evidence="6">Phenol 4-monooxygenase</fullName>
    </alternativeName>
</protein>
<dbReference type="EC" id="1.14.13.227" evidence="9"/>
<dbReference type="EMBL" id="AB568291">
    <property type="protein sequence ID" value="BAJ76718.1"/>
    <property type="molecule type" value="Genomic_DNA"/>
</dbReference>
<dbReference type="RefSeq" id="WP_073678486.1">
    <property type="nucleotide sequence ID" value="NZ_CP092364.2"/>
</dbReference>
<dbReference type="SMR" id="E9RFS9"/>
<dbReference type="STRING" id="134601.AFA91_29120"/>
<dbReference type="BioCyc" id="MetaCyc:MONOMER-19803"/>
<dbReference type="BRENDA" id="1.14.13.222">
    <property type="organism ID" value="13503"/>
</dbReference>
<dbReference type="GO" id="GO:0046872">
    <property type="term" value="F:metal ion binding"/>
    <property type="evidence" value="ECO:0007669"/>
    <property type="project" value="UniProtKB-KW"/>
</dbReference>
<dbReference type="GO" id="GO:0004497">
    <property type="term" value="F:monooxygenase activity"/>
    <property type="evidence" value="ECO:0007669"/>
    <property type="project" value="UniProtKB-KW"/>
</dbReference>
<dbReference type="Gene3D" id="1.10.620.20">
    <property type="entry name" value="Ribonucleotide Reductase, subunit A"/>
    <property type="match status" value="1"/>
</dbReference>
<dbReference type="InterPro" id="IPR009078">
    <property type="entry name" value="Ferritin-like_SF"/>
</dbReference>
<dbReference type="InterPro" id="IPR003430">
    <property type="entry name" value="Phenol_Hydrox"/>
</dbReference>
<dbReference type="InterPro" id="IPR012348">
    <property type="entry name" value="RNR-like"/>
</dbReference>
<dbReference type="Pfam" id="PF02332">
    <property type="entry name" value="Phenol_Hydrox"/>
    <property type="match status" value="1"/>
</dbReference>
<dbReference type="SUPFAM" id="SSF47240">
    <property type="entry name" value="Ferritin-like"/>
    <property type="match status" value="1"/>
</dbReference>
<comment type="function">
    <text evidence="2 4 5">Component of the propane 2-monooxygenase multicomponent enzyme system which is involved in the degradation of propane via the O2-dependent hydroxylation of propane (PubMed:21183637). Also involved in the degradation of acetone via the O2-dependent hydroxylation of acetone (PubMed:26293913). Also able to catalyze the oxidation of phenol, methylethylketone (2-butanone), 1-propanol and 2-propanol (PubMed:21183637, PubMed:23171424, PubMed:26293913).</text>
</comment>
<comment type="catalytic activity">
    <reaction evidence="9">
        <text>propane + NADH + O2 + H(+) = propan-2-ol + NAD(+) + H2O</text>
        <dbReference type="Rhea" id="RHEA:49992"/>
        <dbReference type="ChEBI" id="CHEBI:15377"/>
        <dbReference type="ChEBI" id="CHEBI:15378"/>
        <dbReference type="ChEBI" id="CHEBI:15379"/>
        <dbReference type="ChEBI" id="CHEBI:17824"/>
        <dbReference type="ChEBI" id="CHEBI:32879"/>
        <dbReference type="ChEBI" id="CHEBI:57540"/>
        <dbReference type="ChEBI" id="CHEBI:57945"/>
        <dbReference type="EC" id="1.14.13.227"/>
    </reaction>
</comment>
<comment type="catalytic activity">
    <reaction evidence="5">
        <text>acetone + NADH + O2 + H(+) = hydroxyacetone + NAD(+) + H2O</text>
        <dbReference type="Rhea" id="RHEA:55788"/>
        <dbReference type="ChEBI" id="CHEBI:15347"/>
        <dbReference type="ChEBI" id="CHEBI:15377"/>
        <dbReference type="ChEBI" id="CHEBI:15378"/>
        <dbReference type="ChEBI" id="CHEBI:15379"/>
        <dbReference type="ChEBI" id="CHEBI:27957"/>
        <dbReference type="ChEBI" id="CHEBI:57540"/>
        <dbReference type="ChEBI" id="CHEBI:57945"/>
    </reaction>
</comment>
<comment type="catalytic activity">
    <reaction evidence="5">
        <text>butan-2-one + NADH + O2 + H(+) = 1-hydroxy-2-butanone + NAD(+) + H2O</text>
        <dbReference type="Rhea" id="RHEA:55792"/>
        <dbReference type="ChEBI" id="CHEBI:15377"/>
        <dbReference type="ChEBI" id="CHEBI:15378"/>
        <dbReference type="ChEBI" id="CHEBI:15379"/>
        <dbReference type="ChEBI" id="CHEBI:28398"/>
        <dbReference type="ChEBI" id="CHEBI:57540"/>
        <dbReference type="ChEBI" id="CHEBI:57945"/>
        <dbReference type="ChEBI" id="CHEBI:88390"/>
    </reaction>
</comment>
<comment type="catalytic activity">
    <reaction evidence="4 9">
        <text>phenol + NADH + O2 + H(+) = hydroquinone + NAD(+) + H2O</text>
        <dbReference type="Rhea" id="RHEA:55796"/>
        <dbReference type="ChEBI" id="CHEBI:15377"/>
        <dbReference type="ChEBI" id="CHEBI:15378"/>
        <dbReference type="ChEBI" id="CHEBI:15379"/>
        <dbReference type="ChEBI" id="CHEBI:15882"/>
        <dbReference type="ChEBI" id="CHEBI:17594"/>
        <dbReference type="ChEBI" id="CHEBI:57540"/>
        <dbReference type="ChEBI" id="CHEBI:57945"/>
    </reaction>
</comment>
<comment type="cofactor">
    <cofactor evidence="1">
        <name>Fe(2+)</name>
        <dbReference type="ChEBI" id="CHEBI:29033"/>
    </cofactor>
    <text evidence="1">Binds 2 Fe(2+) ions per subunit.</text>
</comment>
<comment type="subunit">
    <text evidence="9 10">The propane 2-monooxygenase multicomponent enzyme system is composed of an electron transfer component and a monooxygenase component interacting with the effector protein MimD. The electron transfer component is composed of a reductase (MimB), and the monooxygenase component is formed by a large subunit (MimA) and a small subunit (MimC) (PubMed:21183637). Requires the presence of the chaperonin-like protein MimG to ensure a productive folding, resulting of a soluble MimA, which leads to the active form of MimABCD (PubMed:23171424).</text>
</comment>
<comment type="induction">
    <text evidence="2 3">By acetone (PubMed:21183637). Transcriptionally activated by MimR (PubMed:21856847).</text>
</comment>
<comment type="similarity">
    <text evidence="8">Belongs to the TmoA/XamoA family.</text>
</comment>
<feature type="initiator methionine" description="Removed" evidence="2">
    <location>
        <position position="1"/>
    </location>
</feature>
<feature type="chain" id="PRO_0000442942" description="Propane 2-monooxygenase, hydroxylase component large subunit">
    <location>
        <begin position="2"/>
        <end position="542"/>
    </location>
</feature>
<feature type="binding site" evidence="1">
    <location>
        <position position="97"/>
    </location>
    <ligand>
        <name>Fe cation</name>
        <dbReference type="ChEBI" id="CHEBI:24875"/>
        <label>1</label>
        <note>catalytic</note>
    </ligand>
</feature>
<feature type="binding site" evidence="1">
    <location>
        <position position="127"/>
    </location>
    <ligand>
        <name>Fe cation</name>
        <dbReference type="ChEBI" id="CHEBI:24875"/>
        <label>1</label>
        <note>catalytic</note>
    </ligand>
</feature>
<feature type="binding site" evidence="1">
    <location>
        <position position="127"/>
    </location>
    <ligand>
        <name>Fe cation</name>
        <dbReference type="ChEBI" id="CHEBI:24875"/>
        <label>2</label>
        <note>catalytic</note>
    </ligand>
</feature>
<feature type="binding site" evidence="1">
    <location>
        <position position="130"/>
    </location>
    <ligand>
        <name>Fe cation</name>
        <dbReference type="ChEBI" id="CHEBI:24875"/>
        <label>1</label>
        <note>catalytic</note>
    </ligand>
</feature>
<feature type="binding site" evidence="1">
    <location>
        <position position="192"/>
    </location>
    <ligand>
        <name>Fe cation</name>
        <dbReference type="ChEBI" id="CHEBI:24875"/>
        <label>2</label>
        <note>catalytic</note>
    </ligand>
</feature>
<feature type="binding site" evidence="1">
    <location>
        <position position="226"/>
    </location>
    <ligand>
        <name>Fe cation</name>
        <dbReference type="ChEBI" id="CHEBI:24875"/>
        <label>1</label>
        <note>catalytic</note>
    </ligand>
</feature>
<feature type="binding site" evidence="1">
    <location>
        <position position="226"/>
    </location>
    <ligand>
        <name>Fe cation</name>
        <dbReference type="ChEBI" id="CHEBI:24875"/>
        <label>2</label>
        <note>catalytic</note>
    </ligand>
</feature>
<feature type="binding site" evidence="1">
    <location>
        <position position="229"/>
    </location>
    <ligand>
        <name>Fe cation</name>
        <dbReference type="ChEBI" id="CHEBI:24875"/>
        <label>2</label>
        <note>catalytic</note>
    </ligand>
</feature>
<gene>
    <name evidence="6" type="primary">mimA</name>
</gene>
<organism>
    <name type="scientific">Mycolicibacterium goodii</name>
    <name type="common">Mycobacterium goodii</name>
    <dbReference type="NCBI Taxonomy" id="134601"/>
    <lineage>
        <taxon>Bacteria</taxon>
        <taxon>Bacillati</taxon>
        <taxon>Actinomycetota</taxon>
        <taxon>Actinomycetes</taxon>
        <taxon>Mycobacteriales</taxon>
        <taxon>Mycobacteriaceae</taxon>
        <taxon>Mycolicibacterium</taxon>
    </lineage>
</organism>
<keyword id="KW-0903">Direct protein sequencing</keyword>
<keyword id="KW-0408">Iron</keyword>
<keyword id="KW-0479">Metal-binding</keyword>
<keyword id="KW-0503">Monooxygenase</keyword>
<keyword id="KW-0520">NAD</keyword>
<keyword id="KW-0560">Oxidoreductase</keyword>
<reference key="1">
    <citation type="journal article" date="2011" name="Appl. Environ. Microbiol.">
        <title>Identification of the monooxygenase gene clusters responsible for the regioselective oxidation of phenol to hydroquinone in mycobacteria.</title>
        <authorList>
            <person name="Furuya T."/>
            <person name="Hirose S."/>
            <person name="Osanai H."/>
            <person name="Semba H."/>
            <person name="Kino K."/>
        </authorList>
    </citation>
    <scope>NUCLEOTIDE SEQUENCE [GENOMIC DNA]</scope>
    <scope>PROTEIN SEQUENCE OF 2-19</scope>
    <scope>FUNCTION AS A PROPANE 2-MONOOXYGENASE</scope>
    <scope>CATALYTIC ACTIVITY</scope>
    <scope>SUBSTRATE SPECIFICITY</scope>
    <scope>INDUCTION BY ACETONE</scope>
    <scope>SUBUNIT</scope>
    <source>
        <strain evidence="11">12523</strain>
    </source>
</reference>
<reference key="2">
    <citation type="journal article" date="2011" name="J. Bacteriol.">
        <title>Identification of the regulator gene responsible for the acetone-responsive expression of the binuclear iron monooxygenase gene cluster in mycobacteria.</title>
        <authorList>
            <person name="Furuya T."/>
            <person name="Hirose S."/>
            <person name="Semba H."/>
            <person name="Kino K."/>
        </authorList>
    </citation>
    <scope>INDUCTION BY MIMR</scope>
    <source>
        <strain>12523</strain>
    </source>
</reference>
<reference key="3">
    <citation type="journal article" date="2013" name="FEBS J.">
        <title>The mycobacterial binuclear iron monooxygenases require a specific chaperonin-like protein for functional expression in a heterologous host.</title>
        <authorList>
            <person name="Furuya T."/>
            <person name="Hayashi M."/>
            <person name="Semba H."/>
            <person name="Kino K."/>
        </authorList>
    </citation>
    <scope>FUNCTION AS A PHENOL 4-MONOOXYGENASE</scope>
    <scope>CATALYTIC ACTIVITY</scope>
    <scope>SUBUNIT</scope>
    <source>
        <strain>12523</strain>
    </source>
</reference>
<reference key="4">
    <citation type="journal article" date="2015" name="FEMS Microbiol. Lett.">
        <title>Catalytic function of the mycobacterial binuclear iron monooxygenase in acetone metabolism.</title>
        <authorList>
            <person name="Furuya T."/>
            <person name="Nakao T."/>
            <person name="Kino K."/>
        </authorList>
    </citation>
    <scope>FUNCTION AS AN ACETONE 1-MONOOXYGENASE</scope>
    <scope>CATALYTIC ACTIVITY</scope>
    <scope>SUBSTRATE SPECIFICITY</scope>
    <source>
        <strain>12523</strain>
    </source>
</reference>
<accession>E9RFS9</accession>
<sequence>MSRQSLTKAHAKISELTWEPTFATPATRFGTDYTFEKAPKKDPLKQIMRSYFSMEEEKDNRVYGAMDGAIRGNMFRQVQQRWLEWQKLFLSIIPFPEISAARAMPMAIDAVPNPEIHNGLAVQMIDEVRHSTIQMNLKKLYMNNYIDPAGFDMTEKAFANNYAGTIGRQFGEGFITGDAITAANIYLTVVAETAFTNTLFVAMPDEAAANGDYLLPTVFHSVQSDESRHISNGYSILLMALADERNRPLLERDLRYAWWNNHCVVDAAIGTFIEYGTKDRRKDRESYAEMWRRWIYDDYYRSYLLPLEKYGLTIPHDLVEEAWKRIVEKGYVHEVARFFATGWPVNYWRIDTMTDTDFEWFEHKYPGWYNKFGKWWENYNRLAYPGRNKPIAFEEVGYQYPHRCWTCMVPALIREDMIVEKVDGQWRTYCSETCYWTDAVAFRGEYEGRATPNMGRLTGFREWETLHHGKDLADIVTDLGYVRDDGKTLVGQPHLDLDPQKMWTLDDVRGNTFNSPNVLLNQMTNDERDAHVAAYRAGGVPA</sequence>